<reference key="1">
    <citation type="journal article" date="2010" name="Genome Biol. Evol.">
        <title>Continuing evolution of Burkholderia mallei through genome reduction and large-scale rearrangements.</title>
        <authorList>
            <person name="Losada L."/>
            <person name="Ronning C.M."/>
            <person name="DeShazer D."/>
            <person name="Woods D."/>
            <person name="Fedorova N."/>
            <person name="Kim H.S."/>
            <person name="Shabalina S.A."/>
            <person name="Pearson T.R."/>
            <person name="Brinkac L."/>
            <person name="Tan P."/>
            <person name="Nandi T."/>
            <person name="Crabtree J."/>
            <person name="Badger J."/>
            <person name="Beckstrom-Sternberg S."/>
            <person name="Saqib M."/>
            <person name="Schutzer S.E."/>
            <person name="Keim P."/>
            <person name="Nierman W.C."/>
        </authorList>
    </citation>
    <scope>NUCLEOTIDE SEQUENCE [LARGE SCALE GENOMIC DNA]</scope>
    <source>
        <strain>1106a</strain>
    </source>
</reference>
<feature type="chain" id="PRO_1000010386" description="Heat-inducible transcription repressor HrcA">
    <location>
        <begin position="1"/>
        <end position="340"/>
    </location>
</feature>
<protein>
    <recommendedName>
        <fullName evidence="1">Heat-inducible transcription repressor HrcA</fullName>
    </recommendedName>
</protein>
<evidence type="ECO:0000255" key="1">
    <source>
        <dbReference type="HAMAP-Rule" id="MF_00081"/>
    </source>
</evidence>
<accession>A3NYY3</accession>
<sequence length="340" mass="37426">MLDPRARTLLKTLIERYIADGQPVGSRTLSRYSGLELSPATIRNVMSDLEELGLVSSPHTSAGRVPTPRGYRLFVDTMLTVESPIDSDAVTRLVQTTLQAGEPQQRVVAAAASVLSNLSQFAGVVLTPRRSHVFKQIEFLRLSDKRILLIIVTPEGDVQNRMIATQRDYAPAQLTEASNYINAHFAGLSFDEVRRRLREEIDQLRGDMTALMHAAVTASTEEPDDEETVLISGERNLLEVADLSSDMARLRKLFDVFDQKTSLLQLLDVSSHAQGVQIFIGGESTLVPIDEMSVVTAPYEVNGKIVGTLGVIGPTRMAYNRVIPIVDITARLLSLTLSQQ</sequence>
<dbReference type="EMBL" id="CP000572">
    <property type="protein sequence ID" value="ABN92575.1"/>
    <property type="molecule type" value="Genomic_DNA"/>
</dbReference>
<dbReference type="RefSeq" id="WP_004194248.1">
    <property type="nucleotide sequence ID" value="NC_009076.1"/>
</dbReference>
<dbReference type="SMR" id="A3NYY3"/>
<dbReference type="GeneID" id="93061421"/>
<dbReference type="KEGG" id="bpl:BURPS1106A_3317"/>
<dbReference type="HOGENOM" id="CLU_050019_0_0_4"/>
<dbReference type="Proteomes" id="UP000006738">
    <property type="component" value="Chromosome I"/>
</dbReference>
<dbReference type="GO" id="GO:0003677">
    <property type="term" value="F:DNA binding"/>
    <property type="evidence" value="ECO:0007669"/>
    <property type="project" value="InterPro"/>
</dbReference>
<dbReference type="GO" id="GO:0045892">
    <property type="term" value="P:negative regulation of DNA-templated transcription"/>
    <property type="evidence" value="ECO:0007669"/>
    <property type="project" value="UniProtKB-UniRule"/>
</dbReference>
<dbReference type="Gene3D" id="3.30.450.40">
    <property type="match status" value="1"/>
</dbReference>
<dbReference type="Gene3D" id="3.30.390.60">
    <property type="entry name" value="Heat-inducible transcription repressor hrca homolog, domain 3"/>
    <property type="match status" value="1"/>
</dbReference>
<dbReference type="Gene3D" id="1.10.10.10">
    <property type="entry name" value="Winged helix-like DNA-binding domain superfamily/Winged helix DNA-binding domain"/>
    <property type="match status" value="1"/>
</dbReference>
<dbReference type="HAMAP" id="MF_00081">
    <property type="entry name" value="HrcA"/>
    <property type="match status" value="1"/>
</dbReference>
<dbReference type="InterPro" id="IPR029016">
    <property type="entry name" value="GAF-like_dom_sf"/>
</dbReference>
<dbReference type="InterPro" id="IPR002571">
    <property type="entry name" value="HrcA"/>
</dbReference>
<dbReference type="InterPro" id="IPR021153">
    <property type="entry name" value="HrcA_C"/>
</dbReference>
<dbReference type="InterPro" id="IPR036388">
    <property type="entry name" value="WH-like_DNA-bd_sf"/>
</dbReference>
<dbReference type="InterPro" id="IPR036390">
    <property type="entry name" value="WH_DNA-bd_sf"/>
</dbReference>
<dbReference type="InterPro" id="IPR005104">
    <property type="entry name" value="WHTH_HrcA_DNA-bd"/>
</dbReference>
<dbReference type="InterPro" id="IPR023120">
    <property type="entry name" value="WHTH_transcript_rep_HrcA_IDD"/>
</dbReference>
<dbReference type="NCBIfam" id="TIGR00331">
    <property type="entry name" value="hrcA"/>
    <property type="match status" value="1"/>
</dbReference>
<dbReference type="PANTHER" id="PTHR34824">
    <property type="entry name" value="HEAT-INDUCIBLE TRANSCRIPTION REPRESSOR HRCA"/>
    <property type="match status" value="1"/>
</dbReference>
<dbReference type="PANTHER" id="PTHR34824:SF1">
    <property type="entry name" value="HEAT-INDUCIBLE TRANSCRIPTION REPRESSOR HRCA"/>
    <property type="match status" value="1"/>
</dbReference>
<dbReference type="Pfam" id="PF01628">
    <property type="entry name" value="HrcA"/>
    <property type="match status" value="1"/>
</dbReference>
<dbReference type="Pfam" id="PF03444">
    <property type="entry name" value="HrcA_DNA-bdg"/>
    <property type="match status" value="1"/>
</dbReference>
<dbReference type="PIRSF" id="PIRSF005485">
    <property type="entry name" value="HrcA"/>
    <property type="match status" value="1"/>
</dbReference>
<dbReference type="SUPFAM" id="SSF55781">
    <property type="entry name" value="GAF domain-like"/>
    <property type="match status" value="1"/>
</dbReference>
<dbReference type="SUPFAM" id="SSF46785">
    <property type="entry name" value="Winged helix' DNA-binding domain"/>
    <property type="match status" value="1"/>
</dbReference>
<gene>
    <name evidence="1" type="primary">hrcA</name>
    <name type="ordered locus">BURPS1106A_3317</name>
</gene>
<organism>
    <name type="scientific">Burkholderia pseudomallei (strain 1106a)</name>
    <dbReference type="NCBI Taxonomy" id="357348"/>
    <lineage>
        <taxon>Bacteria</taxon>
        <taxon>Pseudomonadati</taxon>
        <taxon>Pseudomonadota</taxon>
        <taxon>Betaproteobacteria</taxon>
        <taxon>Burkholderiales</taxon>
        <taxon>Burkholderiaceae</taxon>
        <taxon>Burkholderia</taxon>
        <taxon>pseudomallei group</taxon>
    </lineage>
</organism>
<proteinExistence type="inferred from homology"/>
<keyword id="KW-0678">Repressor</keyword>
<keyword id="KW-0346">Stress response</keyword>
<keyword id="KW-0804">Transcription</keyword>
<keyword id="KW-0805">Transcription regulation</keyword>
<comment type="function">
    <text evidence="1">Negative regulator of class I heat shock genes (grpE-dnaK-dnaJ and groELS operons). Prevents heat-shock induction of these operons.</text>
</comment>
<comment type="similarity">
    <text evidence="1">Belongs to the HrcA family.</text>
</comment>
<name>HRCA_BURP0</name>